<organism>
    <name type="scientific">Vibrio cholerae serotype O1 (strain ATCC 39315 / El Tor Inaba N16961)</name>
    <dbReference type="NCBI Taxonomy" id="243277"/>
    <lineage>
        <taxon>Bacteria</taxon>
        <taxon>Pseudomonadati</taxon>
        <taxon>Pseudomonadota</taxon>
        <taxon>Gammaproteobacteria</taxon>
        <taxon>Vibrionales</taxon>
        <taxon>Vibrionaceae</taxon>
        <taxon>Vibrio</taxon>
    </lineage>
</organism>
<evidence type="ECO:0000255" key="1">
    <source>
        <dbReference type="HAMAP-Rule" id="MF_00072"/>
    </source>
</evidence>
<sequence length="531" mass="59626">MLMSTTPYFGEVSKRRTFAIISHPDAGKTTITEKVLLFGRAIQVAGTVKGRGSNQHAKSDWMEMEKERGISVTTSVMQFPYGDCLVNLLDTPGHEDFSEDTYRTLTAVDSCLMVIDAAKGVEDRTRKLMEVTRLRDTPIVTFMNKLDREIRDPMELMDEVENELKIACSPITWPIGCGKEFKGVYHIHRDETILYTSGQGHTIQEERIIKGLDNPELDQAVGADLAAQLREELELVLGASHEFDRELFLQGELTPVFFGTALGNFGVDHMLDGLTQWAPSPMPRQAAERVVEASEEKFTGFVFKIQANMDPKHRDRIAFVRIVSGTYKQGMKMNHVRLGKQVNISDAVTFMAGDRARAEEAFAGDIIGLHNHGTIQIGDTFTQGETLKFTGIPNFAPELFRRIRLRDPLKQKQLLKGLVQLSEEGAVQVFRPLQNNDLIVGAVGVLQFDVVVSRLKSEYNVEAIYEGVNVATARWVECDDVKKFEEFKRKNQSNLALDGGDNLAYIAPTMVNLNLAQERSPEVKFRATREH</sequence>
<comment type="function">
    <text evidence="1">Increases the formation of ribosomal termination complexes and stimulates activities of RF-1 and RF-2. It binds guanine nucleotides and has strong preference for UGA stop codons. It may interact directly with the ribosome. The stimulation of RF-1 and RF-2 is significantly reduced by GTP and GDP, but not by GMP.</text>
</comment>
<comment type="subcellular location">
    <subcellularLocation>
        <location evidence="1">Cytoplasm</location>
    </subcellularLocation>
</comment>
<comment type="similarity">
    <text evidence="1">Belongs to the TRAFAC class translation factor GTPase superfamily. Classic translation factor GTPase family. PrfC subfamily.</text>
</comment>
<feature type="chain" id="PRO_0000210979" description="Peptide chain release factor 3">
    <location>
        <begin position="1"/>
        <end position="531"/>
    </location>
</feature>
<feature type="domain" description="tr-type G">
    <location>
        <begin position="13"/>
        <end position="282"/>
    </location>
</feature>
<feature type="binding site" evidence="1">
    <location>
        <begin position="22"/>
        <end position="29"/>
    </location>
    <ligand>
        <name>GTP</name>
        <dbReference type="ChEBI" id="CHEBI:37565"/>
    </ligand>
</feature>
<feature type="binding site" evidence="1">
    <location>
        <begin position="90"/>
        <end position="94"/>
    </location>
    <ligand>
        <name>GTP</name>
        <dbReference type="ChEBI" id="CHEBI:37565"/>
    </ligand>
</feature>
<feature type="binding site" evidence="1">
    <location>
        <begin position="144"/>
        <end position="147"/>
    </location>
    <ligand>
        <name>GTP</name>
        <dbReference type="ChEBI" id="CHEBI:37565"/>
    </ligand>
</feature>
<name>RF3_VIBCH</name>
<keyword id="KW-0963">Cytoplasm</keyword>
<keyword id="KW-0342">GTP-binding</keyword>
<keyword id="KW-0547">Nucleotide-binding</keyword>
<keyword id="KW-0648">Protein biosynthesis</keyword>
<keyword id="KW-1185">Reference proteome</keyword>
<reference key="1">
    <citation type="journal article" date="2000" name="Nature">
        <title>DNA sequence of both chromosomes of the cholera pathogen Vibrio cholerae.</title>
        <authorList>
            <person name="Heidelberg J.F."/>
            <person name="Eisen J.A."/>
            <person name="Nelson W.C."/>
            <person name="Clayton R.A."/>
            <person name="Gwinn M.L."/>
            <person name="Dodson R.J."/>
            <person name="Haft D.H."/>
            <person name="Hickey E.K."/>
            <person name="Peterson J.D."/>
            <person name="Umayam L.A."/>
            <person name="Gill S.R."/>
            <person name="Nelson K.E."/>
            <person name="Read T.D."/>
            <person name="Tettelin H."/>
            <person name="Richardson D.L."/>
            <person name="Ermolaeva M.D."/>
            <person name="Vamathevan J.J."/>
            <person name="Bass S."/>
            <person name="Qin H."/>
            <person name="Dragoi I."/>
            <person name="Sellers P."/>
            <person name="McDonald L.A."/>
            <person name="Utterback T.R."/>
            <person name="Fleischmann R.D."/>
            <person name="Nierman W.C."/>
            <person name="White O."/>
            <person name="Salzberg S.L."/>
            <person name="Smith H.O."/>
            <person name="Colwell R.R."/>
            <person name="Mekalanos J.J."/>
            <person name="Venter J.C."/>
            <person name="Fraser C.M."/>
        </authorList>
    </citation>
    <scope>NUCLEOTIDE SEQUENCE [LARGE SCALE GENOMIC DNA]</scope>
    <source>
        <strain>ATCC 39315 / El Tor Inaba N16961</strain>
    </source>
</reference>
<gene>
    <name evidence="1" type="primary">prfC</name>
    <name type="ordered locus">VC_0659</name>
</gene>
<proteinExistence type="inferred from homology"/>
<dbReference type="EMBL" id="AE003852">
    <property type="protein sequence ID" value="AAF93825.1"/>
    <property type="molecule type" value="Genomic_DNA"/>
</dbReference>
<dbReference type="PIR" id="E82295">
    <property type="entry name" value="E82295"/>
</dbReference>
<dbReference type="RefSeq" id="NP_230308.1">
    <property type="nucleotide sequence ID" value="NC_002505.1"/>
</dbReference>
<dbReference type="SMR" id="Q9KU64"/>
<dbReference type="STRING" id="243277.VC_0659"/>
<dbReference type="DNASU" id="2615449"/>
<dbReference type="EnsemblBacteria" id="AAF93825">
    <property type="protein sequence ID" value="AAF93825"/>
    <property type="gene ID" value="VC_0659"/>
</dbReference>
<dbReference type="KEGG" id="vch:VC_0659"/>
<dbReference type="PATRIC" id="fig|243277.26.peg.630"/>
<dbReference type="eggNOG" id="COG4108">
    <property type="taxonomic scope" value="Bacteria"/>
</dbReference>
<dbReference type="HOGENOM" id="CLU_002794_2_1_6"/>
<dbReference type="Proteomes" id="UP000000584">
    <property type="component" value="Chromosome 1"/>
</dbReference>
<dbReference type="GO" id="GO:0005829">
    <property type="term" value="C:cytosol"/>
    <property type="evidence" value="ECO:0000318"/>
    <property type="project" value="GO_Central"/>
</dbReference>
<dbReference type="GO" id="GO:0005525">
    <property type="term" value="F:GTP binding"/>
    <property type="evidence" value="ECO:0007669"/>
    <property type="project" value="UniProtKB-UniRule"/>
</dbReference>
<dbReference type="GO" id="GO:0003924">
    <property type="term" value="F:GTPase activity"/>
    <property type="evidence" value="ECO:0007669"/>
    <property type="project" value="InterPro"/>
</dbReference>
<dbReference type="GO" id="GO:0097216">
    <property type="term" value="F:guanosine tetraphosphate binding"/>
    <property type="evidence" value="ECO:0007669"/>
    <property type="project" value="UniProtKB-ARBA"/>
</dbReference>
<dbReference type="GO" id="GO:0016150">
    <property type="term" value="F:translation release factor activity, codon nonspecific"/>
    <property type="evidence" value="ECO:0000318"/>
    <property type="project" value="GO_Central"/>
</dbReference>
<dbReference type="GO" id="GO:0016149">
    <property type="term" value="F:translation release factor activity, codon specific"/>
    <property type="evidence" value="ECO:0007669"/>
    <property type="project" value="UniProtKB-UniRule"/>
</dbReference>
<dbReference type="GO" id="GO:0006449">
    <property type="term" value="P:regulation of translational termination"/>
    <property type="evidence" value="ECO:0007669"/>
    <property type="project" value="UniProtKB-UniRule"/>
</dbReference>
<dbReference type="GO" id="GO:0006415">
    <property type="term" value="P:translational termination"/>
    <property type="evidence" value="ECO:0000318"/>
    <property type="project" value="GO_Central"/>
</dbReference>
<dbReference type="CDD" id="cd04169">
    <property type="entry name" value="RF3"/>
    <property type="match status" value="1"/>
</dbReference>
<dbReference type="CDD" id="cd03689">
    <property type="entry name" value="RF3_II"/>
    <property type="match status" value="1"/>
</dbReference>
<dbReference type="CDD" id="cd16259">
    <property type="entry name" value="RF3_III"/>
    <property type="match status" value="1"/>
</dbReference>
<dbReference type="FunFam" id="2.40.30.10:FF:000040">
    <property type="entry name" value="Peptide chain release factor 3"/>
    <property type="match status" value="1"/>
</dbReference>
<dbReference type="FunFam" id="3.30.70.3280:FF:000001">
    <property type="entry name" value="Peptide chain release factor 3"/>
    <property type="match status" value="1"/>
</dbReference>
<dbReference type="FunFam" id="3.40.50.300:FF:000542">
    <property type="entry name" value="Peptide chain release factor 3"/>
    <property type="match status" value="1"/>
</dbReference>
<dbReference type="Gene3D" id="3.40.50.300">
    <property type="entry name" value="P-loop containing nucleotide triphosphate hydrolases"/>
    <property type="match status" value="3"/>
</dbReference>
<dbReference type="Gene3D" id="3.30.70.3280">
    <property type="entry name" value="Peptide chain release factor 3, domain III"/>
    <property type="match status" value="1"/>
</dbReference>
<dbReference type="HAMAP" id="MF_00072">
    <property type="entry name" value="Rel_fac_3"/>
    <property type="match status" value="1"/>
</dbReference>
<dbReference type="InterPro" id="IPR053905">
    <property type="entry name" value="EF-G-like_DII"/>
</dbReference>
<dbReference type="InterPro" id="IPR035647">
    <property type="entry name" value="EFG_III/V"/>
</dbReference>
<dbReference type="InterPro" id="IPR031157">
    <property type="entry name" value="G_TR_CS"/>
</dbReference>
<dbReference type="InterPro" id="IPR027417">
    <property type="entry name" value="P-loop_NTPase"/>
</dbReference>
<dbReference type="InterPro" id="IPR004548">
    <property type="entry name" value="PrfC"/>
</dbReference>
<dbReference type="InterPro" id="IPR032090">
    <property type="entry name" value="RF3_C"/>
</dbReference>
<dbReference type="InterPro" id="IPR038467">
    <property type="entry name" value="RF3_dom_3_sf"/>
</dbReference>
<dbReference type="InterPro" id="IPR041732">
    <property type="entry name" value="RF3_GTP-bd"/>
</dbReference>
<dbReference type="InterPro" id="IPR005225">
    <property type="entry name" value="Small_GTP-bd"/>
</dbReference>
<dbReference type="InterPro" id="IPR000795">
    <property type="entry name" value="T_Tr_GTP-bd_dom"/>
</dbReference>
<dbReference type="InterPro" id="IPR009000">
    <property type="entry name" value="Transl_B-barrel_sf"/>
</dbReference>
<dbReference type="NCBIfam" id="TIGR00503">
    <property type="entry name" value="prfC"/>
    <property type="match status" value="1"/>
</dbReference>
<dbReference type="NCBIfam" id="NF001964">
    <property type="entry name" value="PRK00741.1"/>
    <property type="match status" value="1"/>
</dbReference>
<dbReference type="NCBIfam" id="TIGR00231">
    <property type="entry name" value="small_GTP"/>
    <property type="match status" value="1"/>
</dbReference>
<dbReference type="PANTHER" id="PTHR43556">
    <property type="entry name" value="PEPTIDE CHAIN RELEASE FACTOR RF3"/>
    <property type="match status" value="1"/>
</dbReference>
<dbReference type="PANTHER" id="PTHR43556:SF2">
    <property type="entry name" value="PEPTIDE CHAIN RELEASE FACTOR RF3"/>
    <property type="match status" value="1"/>
</dbReference>
<dbReference type="Pfam" id="PF22042">
    <property type="entry name" value="EF-G_D2"/>
    <property type="match status" value="1"/>
</dbReference>
<dbReference type="Pfam" id="PF00009">
    <property type="entry name" value="GTP_EFTU"/>
    <property type="match status" value="1"/>
</dbReference>
<dbReference type="Pfam" id="PF16658">
    <property type="entry name" value="RF3_C"/>
    <property type="match status" value="1"/>
</dbReference>
<dbReference type="PRINTS" id="PR00315">
    <property type="entry name" value="ELONGATNFCT"/>
</dbReference>
<dbReference type="SUPFAM" id="SSF54980">
    <property type="entry name" value="EF-G C-terminal domain-like"/>
    <property type="match status" value="1"/>
</dbReference>
<dbReference type="SUPFAM" id="SSF52540">
    <property type="entry name" value="P-loop containing nucleoside triphosphate hydrolases"/>
    <property type="match status" value="1"/>
</dbReference>
<dbReference type="SUPFAM" id="SSF50447">
    <property type="entry name" value="Translation proteins"/>
    <property type="match status" value="1"/>
</dbReference>
<dbReference type="PROSITE" id="PS00301">
    <property type="entry name" value="G_TR_1"/>
    <property type="match status" value="1"/>
</dbReference>
<dbReference type="PROSITE" id="PS51722">
    <property type="entry name" value="G_TR_2"/>
    <property type="match status" value="1"/>
</dbReference>
<accession>Q9KU64</accession>
<protein>
    <recommendedName>
        <fullName evidence="1">Peptide chain release factor 3</fullName>
        <shortName evidence="1">RF-3</shortName>
    </recommendedName>
</protein>